<protein>
    <recommendedName>
        <fullName>Beta-glucosidase A</fullName>
        <ecNumber>3.2.1.21</ecNumber>
    </recommendedName>
    <alternativeName>
        <fullName>Beta-D-glucoside glucohydrolase</fullName>
    </alternativeName>
    <alternativeName>
        <fullName>Cellobiase</fullName>
    </alternativeName>
    <alternativeName>
        <fullName>Gentiobiase</fullName>
    </alternativeName>
</protein>
<proteinExistence type="evidence at protein level"/>
<gene>
    <name type="primary">bglA</name>
    <name type="ordered locus">Cthe_0212</name>
</gene>
<reference key="1">
    <citation type="journal article" date="1991" name="Eur. J. Biochem.">
        <title>Structure of the beta-glucosidase gene bglA of Clostridium thermocellum. Sequence analysis reveals a superfamily of cellulases and beta-glycosidases including human lactase/phlorizin hydrolase.</title>
        <authorList>
            <person name="Graebnitz F."/>
            <person name="Seiss M."/>
            <person name="Ruecknagel K.P."/>
            <person name="Staudenbauer W.L."/>
        </authorList>
    </citation>
    <scope>NUCLEOTIDE SEQUENCE [GENOMIC DNA]</scope>
</reference>
<reference key="2">
    <citation type="submission" date="2007-02" db="EMBL/GenBank/DDBJ databases">
        <title>Complete sequence of Clostridium thermocellum ATCC 27405.</title>
        <authorList>
            <consortium name="US DOE Joint Genome Institute"/>
            <person name="Copeland A."/>
            <person name="Lucas S."/>
            <person name="Lapidus A."/>
            <person name="Barry K."/>
            <person name="Detter J.C."/>
            <person name="Glavina del Rio T."/>
            <person name="Hammon N."/>
            <person name="Israni S."/>
            <person name="Dalin E."/>
            <person name="Tice H."/>
            <person name="Pitluck S."/>
            <person name="Chertkov O."/>
            <person name="Brettin T."/>
            <person name="Bruce D."/>
            <person name="Han C."/>
            <person name="Tapia R."/>
            <person name="Gilna P."/>
            <person name="Schmutz J."/>
            <person name="Larimer F."/>
            <person name="Land M."/>
            <person name="Hauser L."/>
            <person name="Kyrpides N."/>
            <person name="Mikhailova N."/>
            <person name="Wu J.H.D."/>
            <person name="Newcomb M."/>
            <person name="Richardson P."/>
        </authorList>
    </citation>
    <scope>NUCLEOTIDE SEQUENCE [LARGE SCALE GENOMIC DNA]</scope>
    <source>
        <strain>ATCC 27405 / DSM 1237 / JCM 9322 / NBRC 103400 / NCIMB 10682 / NRRL B-4536 / VPI 7372</strain>
    </source>
</reference>
<reference key="3">
    <citation type="submission" date="2017-07" db="PDB data bank">
        <title>Crystal structure of Ruminiclostridium Thermocellum beta-Glucosidase A.</title>
        <authorList>
            <person name="Salama-Alber O."/>
            <person name="Bayer E."/>
        </authorList>
    </citation>
    <scope>X-RAY CRYSTALLOGRAPHY (1.60 ANGSTROMS) OF 3-448</scope>
</reference>
<feature type="chain" id="PRO_0000063876" description="Beta-glucosidase A">
    <location>
        <begin position="1"/>
        <end position="448"/>
    </location>
</feature>
<feature type="active site" description="Proton donor" evidence="1">
    <location>
        <position position="166"/>
    </location>
</feature>
<feature type="active site" description="Nucleophile" evidence="2">
    <location>
        <position position="355"/>
    </location>
</feature>
<feature type="strand" evidence="4">
    <location>
        <begin position="3"/>
        <end position="5"/>
    </location>
</feature>
<feature type="strand" evidence="4">
    <location>
        <begin position="11"/>
        <end position="15"/>
    </location>
</feature>
<feature type="helix" evidence="4">
    <location>
        <begin position="18"/>
        <end position="21"/>
    </location>
</feature>
<feature type="helix" evidence="4">
    <location>
        <begin position="34"/>
        <end position="39"/>
    </location>
</feature>
<feature type="helix" evidence="4">
    <location>
        <begin position="46"/>
        <end position="48"/>
    </location>
</feature>
<feature type="turn" evidence="4">
    <location>
        <begin position="51"/>
        <end position="55"/>
    </location>
</feature>
<feature type="helix" evidence="4">
    <location>
        <begin position="57"/>
        <end position="71"/>
    </location>
</feature>
<feature type="strand" evidence="4">
    <location>
        <begin position="74"/>
        <end position="79"/>
    </location>
</feature>
<feature type="helix" evidence="4">
    <location>
        <begin position="82"/>
        <end position="85"/>
    </location>
</feature>
<feature type="strand" evidence="4">
    <location>
        <begin position="89"/>
        <end position="92"/>
    </location>
</feature>
<feature type="helix" evidence="4">
    <location>
        <begin position="95"/>
        <end position="110"/>
    </location>
</feature>
<feature type="strand" evidence="4">
    <location>
        <begin position="114"/>
        <end position="122"/>
    </location>
</feature>
<feature type="helix" evidence="4">
    <location>
        <begin position="126"/>
        <end position="130"/>
    </location>
</feature>
<feature type="helix" evidence="4">
    <location>
        <begin position="133"/>
        <end position="135"/>
    </location>
</feature>
<feature type="helix" evidence="4">
    <location>
        <begin position="138"/>
        <end position="154"/>
    </location>
</feature>
<feature type="turn" evidence="4">
    <location>
        <begin position="155"/>
        <end position="157"/>
    </location>
</feature>
<feature type="strand" evidence="4">
    <location>
        <begin position="160"/>
        <end position="165"/>
    </location>
</feature>
<feature type="helix" evidence="4">
    <location>
        <begin position="167"/>
        <end position="175"/>
    </location>
</feature>
<feature type="helix" evidence="4">
    <location>
        <begin position="187"/>
        <end position="210"/>
    </location>
</feature>
<feature type="strand" evidence="4">
    <location>
        <begin position="214"/>
        <end position="222"/>
    </location>
</feature>
<feature type="strand" evidence="4">
    <location>
        <begin position="226"/>
        <end position="232"/>
    </location>
</feature>
<feature type="helix" evidence="4">
    <location>
        <begin position="233"/>
        <end position="245"/>
    </location>
</feature>
<feature type="helix" evidence="4">
    <location>
        <begin position="247"/>
        <end position="256"/>
    </location>
</feature>
<feature type="helix" evidence="4">
    <location>
        <begin position="261"/>
        <end position="269"/>
    </location>
</feature>
<feature type="helix" evidence="4">
    <location>
        <begin position="280"/>
        <end position="284"/>
    </location>
</feature>
<feature type="strand" evidence="4">
    <location>
        <begin position="291"/>
        <end position="294"/>
    </location>
</feature>
<feature type="strand" evidence="4">
    <location>
        <begin position="299"/>
        <end position="303"/>
    </location>
</feature>
<feature type="strand" evidence="4">
    <location>
        <begin position="307"/>
        <end position="313"/>
    </location>
</feature>
<feature type="helix" evidence="4">
    <location>
        <begin position="315"/>
        <end position="318"/>
    </location>
</feature>
<feature type="helix" evidence="4">
    <location>
        <begin position="333"/>
        <end position="345"/>
    </location>
</feature>
<feature type="strand" evidence="4">
    <location>
        <begin position="351"/>
        <end position="356"/>
    </location>
</feature>
<feature type="helix" evidence="4">
    <location>
        <begin position="373"/>
        <end position="391"/>
    </location>
</feature>
<feature type="strand" evidence="4">
    <location>
        <begin position="396"/>
        <end position="402"/>
    </location>
</feature>
<feature type="helix" evidence="4">
    <location>
        <begin position="410"/>
        <end position="415"/>
    </location>
</feature>
<feature type="strand" evidence="4">
    <location>
        <begin position="420"/>
        <end position="423"/>
    </location>
</feature>
<feature type="turn" evidence="4">
    <location>
        <begin position="425"/>
        <end position="427"/>
    </location>
</feature>
<feature type="strand" evidence="4">
    <location>
        <begin position="430"/>
        <end position="432"/>
    </location>
</feature>
<feature type="helix" evidence="4">
    <location>
        <begin position="434"/>
        <end position="445"/>
    </location>
</feature>
<dbReference type="EC" id="3.2.1.21"/>
<dbReference type="EMBL" id="X60268">
    <property type="protein sequence ID" value="CAA42814.1"/>
    <property type="molecule type" value="Genomic_DNA"/>
</dbReference>
<dbReference type="EMBL" id="CP000568">
    <property type="protein sequence ID" value="ABN51453.1"/>
    <property type="status" value="ALT_INIT"/>
    <property type="molecule type" value="Genomic_DNA"/>
</dbReference>
<dbReference type="PIR" id="S17215">
    <property type="entry name" value="S17215"/>
</dbReference>
<dbReference type="PDB" id="5OGZ">
    <property type="method" value="X-ray"/>
    <property type="resolution" value="1.60 A"/>
    <property type="chains" value="A/B=3-448"/>
</dbReference>
<dbReference type="PDB" id="8IVY">
    <property type="method" value="X-ray"/>
    <property type="resolution" value="1.95 A"/>
    <property type="chains" value="A/B=1-448"/>
</dbReference>
<dbReference type="PDB" id="9IQB">
    <property type="method" value="X-ray"/>
    <property type="resolution" value="3.00 A"/>
    <property type="chains" value="A/B/C/D/E/F/G/H/I/J/K/L=1-448"/>
</dbReference>
<dbReference type="PDBsum" id="5OGZ"/>
<dbReference type="PDBsum" id="8IVY"/>
<dbReference type="PDBsum" id="9IQB"/>
<dbReference type="SMR" id="P26208"/>
<dbReference type="STRING" id="203119.Cthe_0212"/>
<dbReference type="CAZy" id="GH1">
    <property type="family name" value="Glycoside Hydrolase Family 1"/>
</dbReference>
<dbReference type="DNASU" id="4808630"/>
<dbReference type="KEGG" id="cth:Cthe_0212"/>
<dbReference type="eggNOG" id="COG2723">
    <property type="taxonomic scope" value="Bacteria"/>
</dbReference>
<dbReference type="HOGENOM" id="CLU_001859_1_3_9"/>
<dbReference type="BRENDA" id="3.2.1.21">
    <property type="organism ID" value="1530"/>
</dbReference>
<dbReference type="UniPathway" id="UPA00696"/>
<dbReference type="Proteomes" id="UP000002145">
    <property type="component" value="Chromosome"/>
</dbReference>
<dbReference type="GO" id="GO:0005829">
    <property type="term" value="C:cytosol"/>
    <property type="evidence" value="ECO:0007669"/>
    <property type="project" value="TreeGrafter"/>
</dbReference>
<dbReference type="GO" id="GO:0008422">
    <property type="term" value="F:beta-glucosidase activity"/>
    <property type="evidence" value="ECO:0007669"/>
    <property type="project" value="UniProtKB-EC"/>
</dbReference>
<dbReference type="GO" id="GO:0030245">
    <property type="term" value="P:cellulose catabolic process"/>
    <property type="evidence" value="ECO:0007669"/>
    <property type="project" value="UniProtKB-UniPathway"/>
</dbReference>
<dbReference type="FunFam" id="3.20.20.80:FF:000004">
    <property type="entry name" value="Beta-glucosidase 6-phospho-beta-glucosidase"/>
    <property type="match status" value="1"/>
</dbReference>
<dbReference type="Gene3D" id="3.20.20.80">
    <property type="entry name" value="Glycosidases"/>
    <property type="match status" value="1"/>
</dbReference>
<dbReference type="InterPro" id="IPR001360">
    <property type="entry name" value="Glyco_hydro_1"/>
</dbReference>
<dbReference type="InterPro" id="IPR018120">
    <property type="entry name" value="Glyco_hydro_1_AS"/>
</dbReference>
<dbReference type="InterPro" id="IPR017736">
    <property type="entry name" value="Glyco_hydro_1_beta-glucosidase"/>
</dbReference>
<dbReference type="InterPro" id="IPR033132">
    <property type="entry name" value="Glyco_hydro_1_N_CS"/>
</dbReference>
<dbReference type="InterPro" id="IPR017853">
    <property type="entry name" value="Glycoside_hydrolase_SF"/>
</dbReference>
<dbReference type="NCBIfam" id="TIGR03356">
    <property type="entry name" value="BGL"/>
    <property type="match status" value="1"/>
</dbReference>
<dbReference type="PANTHER" id="PTHR10353">
    <property type="entry name" value="GLYCOSYL HYDROLASE"/>
    <property type="match status" value="1"/>
</dbReference>
<dbReference type="PANTHER" id="PTHR10353:SF36">
    <property type="entry name" value="LP05116P"/>
    <property type="match status" value="1"/>
</dbReference>
<dbReference type="Pfam" id="PF00232">
    <property type="entry name" value="Glyco_hydro_1"/>
    <property type="match status" value="1"/>
</dbReference>
<dbReference type="PRINTS" id="PR00131">
    <property type="entry name" value="GLHYDRLASE1"/>
</dbReference>
<dbReference type="SUPFAM" id="SSF51445">
    <property type="entry name" value="(Trans)glycosidases"/>
    <property type="match status" value="1"/>
</dbReference>
<dbReference type="PROSITE" id="PS00572">
    <property type="entry name" value="GLYCOSYL_HYDROL_F1_1"/>
    <property type="match status" value="1"/>
</dbReference>
<dbReference type="PROSITE" id="PS00653">
    <property type="entry name" value="GLYCOSYL_HYDROL_F1_2"/>
    <property type="match status" value="1"/>
</dbReference>
<name>BGLA_ACET2</name>
<accession>P26208</accession>
<accession>A3DBX4</accession>
<organism>
    <name type="scientific">Acetivibrio thermocellus (strain ATCC 27405 / DSM 1237 / JCM 9322 / NBRC 103400 / NCIMB 10682 / NRRL B-4536 / VPI 7372)</name>
    <name type="common">Clostridium thermocellum</name>
    <dbReference type="NCBI Taxonomy" id="203119"/>
    <lineage>
        <taxon>Bacteria</taxon>
        <taxon>Bacillati</taxon>
        <taxon>Bacillota</taxon>
        <taxon>Clostridia</taxon>
        <taxon>Eubacteriales</taxon>
        <taxon>Oscillospiraceae</taxon>
        <taxon>Acetivibrio</taxon>
    </lineage>
</organism>
<evidence type="ECO:0000255" key="1"/>
<evidence type="ECO:0000255" key="2">
    <source>
        <dbReference type="PROSITE-ProRule" id="PRU10055"/>
    </source>
</evidence>
<evidence type="ECO:0000305" key="3"/>
<evidence type="ECO:0007829" key="4">
    <source>
        <dbReference type="PDB" id="5OGZ"/>
    </source>
</evidence>
<keyword id="KW-0002">3D-structure</keyword>
<keyword id="KW-0119">Carbohydrate metabolism</keyword>
<keyword id="KW-0136">Cellulose degradation</keyword>
<keyword id="KW-0326">Glycosidase</keyword>
<keyword id="KW-0378">Hydrolase</keyword>
<keyword id="KW-0624">Polysaccharide degradation</keyword>
<keyword id="KW-1185">Reference proteome</keyword>
<comment type="catalytic activity">
    <reaction>
        <text>Hydrolysis of terminal, non-reducing beta-D-glucosyl residues with release of beta-D-glucose.</text>
        <dbReference type="EC" id="3.2.1.21"/>
    </reaction>
</comment>
<comment type="pathway">
    <text>Glycan metabolism; cellulose degradation.</text>
</comment>
<comment type="similarity">
    <text evidence="3">Belongs to the glycosyl hydrolase 1 family.</text>
</comment>
<comment type="sequence caution" evidence="3">
    <conflict type="erroneous initiation">
        <sequence resource="EMBL-CDS" id="ABN51453"/>
    </conflict>
</comment>
<sequence>MSKITFPKDFIWGSATAAYQIEGAYNEDGKGESIWDRFSHTPGNIADGHTGDVACDHYHRYEEDIKIMKEIGIKSYRFSISWPRIFPEGTGKLNQKGLDFYKRLTNLLLENGIMPAITLYHWDLPQKLQDKGGWKNRDTTDYFTEYSEVIFKNLGDIVPIWFTHNEPGVVSLLGHFLGIHAPGIKDLRTSLEVSHNLLLSHGKAVKLFREMNIDAQIGIALNLSYHYPASEKAEDIEAAELSFSLAGRWYLDPVLKGRYPENALKLYKKKGIELSFPEDDLKLISQPIDFIAFNNYSSEFIKYDPSSESGFSPANSILEKFEKTDMGWIIYPEGLYDLLMLLDRDYGKPNIVISENGAAFKDEIGSNGKIEDTKRIQYLKDYLTQAHRAIQDGVNLKAYYLWSLLDNFEWAYGYNKRFGIVHVNFDTLERKIKDSGYWYKEVIKNNGF</sequence>